<reference key="1">
    <citation type="journal article" date="2004" name="Science">
        <title>The Ashbya gossypii genome as a tool for mapping the ancient Saccharomyces cerevisiae genome.</title>
        <authorList>
            <person name="Dietrich F.S."/>
            <person name="Voegeli S."/>
            <person name="Brachat S."/>
            <person name="Lerch A."/>
            <person name="Gates K."/>
            <person name="Steiner S."/>
            <person name="Mohr C."/>
            <person name="Poehlmann R."/>
            <person name="Luedi P."/>
            <person name="Choi S."/>
            <person name="Wing R.A."/>
            <person name="Flavier A."/>
            <person name="Gaffney T.D."/>
            <person name="Philippsen P."/>
        </authorList>
    </citation>
    <scope>NUCLEOTIDE SEQUENCE [LARGE SCALE GENOMIC DNA]</scope>
    <source>
        <strain>ATCC 10895 / CBS 109.51 / FGSC 9923 / NRRL Y-1056</strain>
    </source>
</reference>
<reference key="2">
    <citation type="journal article" date="2013" name="G3 (Bethesda)">
        <title>Genomes of Ashbya fungi isolated from insects reveal four mating-type loci, numerous translocations, lack of transposons, and distinct gene duplications.</title>
        <authorList>
            <person name="Dietrich F.S."/>
            <person name="Voegeli S."/>
            <person name="Kuo S."/>
            <person name="Philippsen P."/>
        </authorList>
    </citation>
    <scope>GENOME REANNOTATION</scope>
    <scope>SEQUENCE REVISION TO 175; 263 AND 273</scope>
    <source>
        <strain>ATCC 10895 / CBS 109.51 / FGSC 9923 / NRRL Y-1056</strain>
    </source>
</reference>
<evidence type="ECO:0000255" key="1">
    <source>
        <dbReference type="HAMAP-Rule" id="MF_03017"/>
    </source>
</evidence>
<accession>Q750P5</accession>
<gene>
    <name evidence="1" type="primary">BNA5</name>
    <name type="ordered locus">AGL098W</name>
</gene>
<name>KYNU_EREGS</name>
<keyword id="KW-0963">Cytoplasm</keyword>
<keyword id="KW-0378">Hydrolase</keyword>
<keyword id="KW-0662">Pyridine nucleotide biosynthesis</keyword>
<keyword id="KW-0663">Pyridoxal phosphate</keyword>
<keyword id="KW-1185">Reference proteome</keyword>
<sequence>MEKARALEEQWPGARDAFHVPSYASLGLGDQTAAVRYLCGHSLGCMPRKTRGSVEAELSAWSARAVEAHVRHPGGTEWVNTDLPLVPQMARMVGASQQEVAVMGSLTANLNALLVAFYRPRGRRTKILLEKQVFPSDFHAFWNQAALHGLDPAATLVQVAPRAGEHTLRTEDIVAAIETHRAELALVCLPGVQYYTGQLLDMASIVAAARREPSIVVGFDLAHAVGNVQLQLHEWGADFACWCSYKYLNAGPGGIAGLFVHERHHGGTLPRLAGWWGTNAATRFEMRQTYDPLPDALGFRQSNPSVLDVAALRASLEVFEDFGGMERVRARSLALTGYLYELLTQSVFYRPEVGADGVGFTILTPANPAERGAQLSLLFWPHSDDPDKNTMPRVFADLRQNGVLGDERHPDVIRLTPCALYNTFMEVFESVQLLNAALERLAPESAV</sequence>
<organism>
    <name type="scientific">Eremothecium gossypii (strain ATCC 10895 / CBS 109.51 / FGSC 9923 / NRRL Y-1056)</name>
    <name type="common">Yeast</name>
    <name type="synonym">Ashbya gossypii</name>
    <dbReference type="NCBI Taxonomy" id="284811"/>
    <lineage>
        <taxon>Eukaryota</taxon>
        <taxon>Fungi</taxon>
        <taxon>Dikarya</taxon>
        <taxon>Ascomycota</taxon>
        <taxon>Saccharomycotina</taxon>
        <taxon>Saccharomycetes</taxon>
        <taxon>Saccharomycetales</taxon>
        <taxon>Saccharomycetaceae</taxon>
        <taxon>Eremothecium</taxon>
    </lineage>
</organism>
<dbReference type="EC" id="3.7.1.3" evidence="1"/>
<dbReference type="EMBL" id="AE016820">
    <property type="protein sequence ID" value="AAS54393.2"/>
    <property type="molecule type" value="Genomic_DNA"/>
</dbReference>
<dbReference type="RefSeq" id="NP_986569.2">
    <property type="nucleotide sequence ID" value="NM_211631.2"/>
</dbReference>
<dbReference type="SMR" id="Q750P5"/>
<dbReference type="FunCoup" id="Q750P5">
    <property type="interactions" value="229"/>
</dbReference>
<dbReference type="STRING" id="284811.Q750P5"/>
<dbReference type="EnsemblFungi" id="AAS54393">
    <property type="protein sequence ID" value="AAS54393"/>
    <property type="gene ID" value="AGOS_AGL098W"/>
</dbReference>
<dbReference type="GeneID" id="4622868"/>
<dbReference type="KEGG" id="ago:AGOS_AGL098W"/>
<dbReference type="eggNOG" id="KOG3846">
    <property type="taxonomic scope" value="Eukaryota"/>
</dbReference>
<dbReference type="HOGENOM" id="CLU_003433_4_0_1"/>
<dbReference type="InParanoid" id="Q750P5"/>
<dbReference type="OMA" id="LPGWNSH"/>
<dbReference type="OrthoDB" id="5978656at2759"/>
<dbReference type="UniPathway" id="UPA00253">
    <property type="reaction ID" value="UER00329"/>
</dbReference>
<dbReference type="UniPathway" id="UPA00334">
    <property type="reaction ID" value="UER00455"/>
</dbReference>
<dbReference type="Proteomes" id="UP000000591">
    <property type="component" value="Chromosome VII"/>
</dbReference>
<dbReference type="GO" id="GO:0005737">
    <property type="term" value="C:cytoplasm"/>
    <property type="evidence" value="ECO:0000318"/>
    <property type="project" value="GO_Central"/>
</dbReference>
<dbReference type="GO" id="GO:0030429">
    <property type="term" value="F:kynureninase activity"/>
    <property type="evidence" value="ECO:0000318"/>
    <property type="project" value="GO_Central"/>
</dbReference>
<dbReference type="GO" id="GO:0030170">
    <property type="term" value="F:pyridoxal phosphate binding"/>
    <property type="evidence" value="ECO:0007669"/>
    <property type="project" value="UniProtKB-UniRule"/>
</dbReference>
<dbReference type="GO" id="GO:0034354">
    <property type="term" value="P:'de novo' NAD biosynthetic process from L-tryptophan"/>
    <property type="evidence" value="ECO:0007669"/>
    <property type="project" value="UniProtKB-UniRule"/>
</dbReference>
<dbReference type="GO" id="GO:0043420">
    <property type="term" value="P:anthranilate metabolic process"/>
    <property type="evidence" value="ECO:0000318"/>
    <property type="project" value="GO_Central"/>
</dbReference>
<dbReference type="GO" id="GO:0097053">
    <property type="term" value="P:L-kynurenine catabolic process"/>
    <property type="evidence" value="ECO:0007669"/>
    <property type="project" value="UniProtKB-UniRule"/>
</dbReference>
<dbReference type="GO" id="GO:0019441">
    <property type="term" value="P:L-tryptophan catabolic process to kynurenine"/>
    <property type="evidence" value="ECO:0000318"/>
    <property type="project" value="GO_Central"/>
</dbReference>
<dbReference type="GO" id="GO:0019805">
    <property type="term" value="P:quinolinate biosynthetic process"/>
    <property type="evidence" value="ECO:0007669"/>
    <property type="project" value="UniProtKB-UniRule"/>
</dbReference>
<dbReference type="FunFam" id="3.40.640.10:FF:000031">
    <property type="entry name" value="Kynureninase"/>
    <property type="match status" value="1"/>
</dbReference>
<dbReference type="Gene3D" id="3.90.1150.10">
    <property type="entry name" value="Aspartate Aminotransferase, domain 1"/>
    <property type="match status" value="1"/>
</dbReference>
<dbReference type="Gene3D" id="3.40.640.10">
    <property type="entry name" value="Type I PLP-dependent aspartate aminotransferase-like (Major domain)"/>
    <property type="match status" value="1"/>
</dbReference>
<dbReference type="HAMAP" id="MF_01970">
    <property type="entry name" value="Kynureninase"/>
    <property type="match status" value="1"/>
</dbReference>
<dbReference type="InterPro" id="IPR010111">
    <property type="entry name" value="Kynureninase"/>
</dbReference>
<dbReference type="InterPro" id="IPR015424">
    <property type="entry name" value="PyrdxlP-dep_Trfase"/>
</dbReference>
<dbReference type="InterPro" id="IPR015421">
    <property type="entry name" value="PyrdxlP-dep_Trfase_major"/>
</dbReference>
<dbReference type="InterPro" id="IPR015422">
    <property type="entry name" value="PyrdxlP-dep_Trfase_small"/>
</dbReference>
<dbReference type="NCBIfam" id="TIGR01814">
    <property type="entry name" value="kynureninase"/>
    <property type="match status" value="1"/>
</dbReference>
<dbReference type="PANTHER" id="PTHR14084">
    <property type="entry name" value="KYNURENINASE"/>
    <property type="match status" value="1"/>
</dbReference>
<dbReference type="PANTHER" id="PTHR14084:SF0">
    <property type="entry name" value="KYNURENINASE"/>
    <property type="match status" value="1"/>
</dbReference>
<dbReference type="Pfam" id="PF22580">
    <property type="entry name" value="KYNU_C"/>
    <property type="match status" value="1"/>
</dbReference>
<dbReference type="PIRSF" id="PIRSF038800">
    <property type="entry name" value="KYNU"/>
    <property type="match status" value="1"/>
</dbReference>
<dbReference type="SUPFAM" id="SSF53383">
    <property type="entry name" value="PLP-dependent transferases"/>
    <property type="match status" value="1"/>
</dbReference>
<proteinExistence type="inferred from homology"/>
<feature type="chain" id="PRO_0000218661" description="Kynureninase">
    <location>
        <begin position="1"/>
        <end position="447"/>
    </location>
</feature>
<feature type="binding site" evidence="1">
    <location>
        <position position="106"/>
    </location>
    <ligand>
        <name>pyridoxal 5'-phosphate</name>
        <dbReference type="ChEBI" id="CHEBI:597326"/>
    </ligand>
</feature>
<feature type="binding site" evidence="1">
    <location>
        <position position="107"/>
    </location>
    <ligand>
        <name>pyridoxal 5'-phosphate</name>
        <dbReference type="ChEBI" id="CHEBI:597326"/>
    </ligand>
</feature>
<feature type="binding site" evidence="1">
    <location>
        <begin position="134"/>
        <end position="137"/>
    </location>
    <ligand>
        <name>pyridoxal 5'-phosphate</name>
        <dbReference type="ChEBI" id="CHEBI:597326"/>
    </ligand>
</feature>
<feature type="binding site" evidence="1">
    <location>
        <position position="220"/>
    </location>
    <ligand>
        <name>pyridoxal 5'-phosphate</name>
        <dbReference type="ChEBI" id="CHEBI:597326"/>
    </ligand>
</feature>
<feature type="binding site" evidence="1">
    <location>
        <position position="223"/>
    </location>
    <ligand>
        <name>pyridoxal 5'-phosphate</name>
        <dbReference type="ChEBI" id="CHEBI:597326"/>
    </ligand>
</feature>
<feature type="binding site" evidence="1">
    <location>
        <position position="245"/>
    </location>
    <ligand>
        <name>pyridoxal 5'-phosphate</name>
        <dbReference type="ChEBI" id="CHEBI:597326"/>
    </ligand>
</feature>
<feature type="binding site" evidence="1">
    <location>
        <position position="275"/>
    </location>
    <ligand>
        <name>pyridoxal 5'-phosphate</name>
        <dbReference type="ChEBI" id="CHEBI:597326"/>
    </ligand>
</feature>
<feature type="binding site" evidence="1">
    <location>
        <position position="303"/>
    </location>
    <ligand>
        <name>pyridoxal 5'-phosphate</name>
        <dbReference type="ChEBI" id="CHEBI:597326"/>
    </ligand>
</feature>
<feature type="modified residue" description="N6-(pyridoxal phosphate)lysine" evidence="1">
    <location>
        <position position="246"/>
    </location>
</feature>
<comment type="function">
    <text evidence="1">Catalyzes the cleavage of L-kynurenine (L-Kyn) and L-3-hydroxykynurenine (L-3OHKyn) into anthranilic acid (AA) and 3-hydroxyanthranilic acid (3-OHAA), respectively.</text>
</comment>
<comment type="catalytic activity">
    <reaction evidence="1">
        <text>L-kynurenine + H2O = anthranilate + L-alanine + H(+)</text>
        <dbReference type="Rhea" id="RHEA:16813"/>
        <dbReference type="ChEBI" id="CHEBI:15377"/>
        <dbReference type="ChEBI" id="CHEBI:15378"/>
        <dbReference type="ChEBI" id="CHEBI:16567"/>
        <dbReference type="ChEBI" id="CHEBI:57959"/>
        <dbReference type="ChEBI" id="CHEBI:57972"/>
        <dbReference type="EC" id="3.7.1.3"/>
    </reaction>
</comment>
<comment type="catalytic activity">
    <reaction evidence="1">
        <text>3-hydroxy-L-kynurenine + H2O = 3-hydroxyanthranilate + L-alanine + H(+)</text>
        <dbReference type="Rhea" id="RHEA:25143"/>
        <dbReference type="ChEBI" id="CHEBI:15377"/>
        <dbReference type="ChEBI" id="CHEBI:15378"/>
        <dbReference type="ChEBI" id="CHEBI:36559"/>
        <dbReference type="ChEBI" id="CHEBI:57972"/>
        <dbReference type="ChEBI" id="CHEBI:58125"/>
        <dbReference type="EC" id="3.7.1.3"/>
    </reaction>
</comment>
<comment type="cofactor">
    <cofactor evidence="1">
        <name>pyridoxal 5'-phosphate</name>
        <dbReference type="ChEBI" id="CHEBI:597326"/>
    </cofactor>
</comment>
<comment type="pathway">
    <text evidence="1">Amino-acid degradation; L-kynurenine degradation; L-alanine and anthranilate from L-kynurenine: step 1/1.</text>
</comment>
<comment type="pathway">
    <text evidence="1">Cofactor biosynthesis; NAD(+) biosynthesis; quinolinate from L-kynurenine: step 2/3.</text>
</comment>
<comment type="subunit">
    <text evidence="1">Homodimer.</text>
</comment>
<comment type="subcellular location">
    <subcellularLocation>
        <location evidence="1">Cytoplasm</location>
    </subcellularLocation>
</comment>
<comment type="similarity">
    <text evidence="1">Belongs to the kynureninase family.</text>
</comment>
<protein>
    <recommendedName>
        <fullName evidence="1">Kynureninase</fullName>
        <ecNumber evidence="1">3.7.1.3</ecNumber>
    </recommendedName>
    <alternativeName>
        <fullName evidence="1">Biosynthesis of nicotinic acid protein 5</fullName>
    </alternativeName>
    <alternativeName>
        <fullName evidence="1">L-kynurenine hydrolase</fullName>
    </alternativeName>
</protein>